<sequence length="75" mass="8226">MSAMVQIRNVPDELLHELKARAAAQRMSLSDFLLARLAEIAEEPALDDVLDRLAALPRRDLGASAAELVDEARSE</sequence>
<protein>
    <recommendedName>
        <fullName>Putative antitoxin VapB12</fullName>
    </recommendedName>
</protein>
<keyword id="KW-1185">Reference proteome</keyword>
<keyword id="KW-1277">Toxin-antitoxin system</keyword>
<accession>P9WJ52</accession>
<accession>L0T7Q5</accession>
<accession>P71979</accession>
<accession>Q8VJY4</accession>
<dbReference type="EMBL" id="AE000516">
    <property type="protein sequence ID" value="AAK46034.1"/>
    <property type="molecule type" value="Genomic_DNA"/>
</dbReference>
<dbReference type="PIR" id="D70686">
    <property type="entry name" value="D70686"/>
</dbReference>
<dbReference type="RefSeq" id="WP_003408469.1">
    <property type="nucleotide sequence ID" value="NZ_KK341227.1"/>
</dbReference>
<dbReference type="SMR" id="P9WJ52"/>
<dbReference type="KEGG" id="mtc:MT1762"/>
<dbReference type="PATRIC" id="fig|83331.31.peg.1891"/>
<dbReference type="HOGENOM" id="CLU_176903_0_0_11"/>
<dbReference type="Proteomes" id="UP000001020">
    <property type="component" value="Chromosome"/>
</dbReference>
<dbReference type="GO" id="GO:0006355">
    <property type="term" value="P:regulation of DNA-templated transcription"/>
    <property type="evidence" value="ECO:0007669"/>
    <property type="project" value="InterPro"/>
</dbReference>
<dbReference type="InterPro" id="IPR053853">
    <property type="entry name" value="FitA-like_RHH"/>
</dbReference>
<dbReference type="InterPro" id="IPR010985">
    <property type="entry name" value="Ribbon_hlx_hlx"/>
</dbReference>
<dbReference type="Pfam" id="PF22513">
    <property type="entry name" value="FitA-like_RHH"/>
    <property type="match status" value="1"/>
</dbReference>
<dbReference type="SUPFAM" id="SSF47598">
    <property type="entry name" value="Ribbon-helix-helix"/>
    <property type="match status" value="1"/>
</dbReference>
<feature type="chain" id="PRO_0000427890" description="Putative antitoxin VapB12">
    <location>
        <begin position="1"/>
        <end position="75"/>
    </location>
</feature>
<name>VPB12_MYCTO</name>
<gene>
    <name type="primary">vapB12</name>
    <name type="ordered locus">MT1762</name>
</gene>
<reference key="1">
    <citation type="journal article" date="2002" name="J. Bacteriol.">
        <title>Whole-genome comparison of Mycobacterium tuberculosis clinical and laboratory strains.</title>
        <authorList>
            <person name="Fleischmann R.D."/>
            <person name="Alland D."/>
            <person name="Eisen J.A."/>
            <person name="Carpenter L."/>
            <person name="White O."/>
            <person name="Peterson J.D."/>
            <person name="DeBoy R.T."/>
            <person name="Dodson R.J."/>
            <person name="Gwinn M.L."/>
            <person name="Haft D.H."/>
            <person name="Hickey E.K."/>
            <person name="Kolonay J.F."/>
            <person name="Nelson W.C."/>
            <person name="Umayam L.A."/>
            <person name="Ermolaeva M.D."/>
            <person name="Salzberg S.L."/>
            <person name="Delcher A."/>
            <person name="Utterback T.R."/>
            <person name="Weidman J.F."/>
            <person name="Khouri H.M."/>
            <person name="Gill J."/>
            <person name="Mikula A."/>
            <person name="Bishai W."/>
            <person name="Jacobs W.R. Jr."/>
            <person name="Venter J.C."/>
            <person name="Fraser C.M."/>
        </authorList>
    </citation>
    <scope>NUCLEOTIDE SEQUENCE [LARGE SCALE GENOMIC DNA]</scope>
    <source>
        <strain>CDC 1551 / Oshkosh</strain>
    </source>
</reference>
<comment type="function">
    <text evidence="1">Putative antitoxin component of a possible type II toxin-antitoxin (TA) system. The cognate toxin is VapC12 (By similarity).</text>
</comment>
<evidence type="ECO:0000250" key="1"/>
<proteinExistence type="inferred from homology"/>
<organism>
    <name type="scientific">Mycobacterium tuberculosis (strain CDC 1551 / Oshkosh)</name>
    <dbReference type="NCBI Taxonomy" id="83331"/>
    <lineage>
        <taxon>Bacteria</taxon>
        <taxon>Bacillati</taxon>
        <taxon>Actinomycetota</taxon>
        <taxon>Actinomycetes</taxon>
        <taxon>Mycobacteriales</taxon>
        <taxon>Mycobacteriaceae</taxon>
        <taxon>Mycobacterium</taxon>
        <taxon>Mycobacterium tuberculosis complex</taxon>
    </lineage>
</organism>